<feature type="chain" id="PRO_0000457934" description="Snake venom metalloproteinase rhomb-I">
    <location>
        <begin position="1"/>
        <end position="200"/>
    </location>
</feature>
<feature type="domain" description="Peptidase M12B" evidence="3">
    <location>
        <begin position="4"/>
        <end position="200"/>
    </location>
</feature>
<feature type="active site" evidence="3">
    <location>
        <position position="141"/>
    </location>
</feature>
<feature type="binding site" evidence="2">
    <location>
        <position position="7"/>
    </location>
    <ligand>
        <name>Ca(2+)</name>
        <dbReference type="ChEBI" id="CHEBI:29108"/>
    </ligand>
</feature>
<feature type="binding site" evidence="2">
    <location>
        <position position="91"/>
    </location>
    <ligand>
        <name>Ca(2+)</name>
        <dbReference type="ChEBI" id="CHEBI:29108"/>
    </ligand>
</feature>
<feature type="binding site" evidence="3">
    <location>
        <position position="140"/>
    </location>
    <ligand>
        <name>Zn(2+)</name>
        <dbReference type="ChEBI" id="CHEBI:29105"/>
        <note>catalytic</note>
    </ligand>
</feature>
<feature type="binding site" evidence="3">
    <location>
        <position position="144"/>
    </location>
    <ligand>
        <name>Zn(2+)</name>
        <dbReference type="ChEBI" id="CHEBI:29105"/>
        <note>catalytic</note>
    </ligand>
</feature>
<feature type="binding site" evidence="3">
    <location>
        <position position="150"/>
    </location>
    <ligand>
        <name>Zn(2+)</name>
        <dbReference type="ChEBI" id="CHEBI:29105"/>
        <note>catalytic</note>
    </ligand>
</feature>
<feature type="binding site" evidence="2">
    <location>
        <position position="195"/>
    </location>
    <ligand>
        <name>Ca(2+)</name>
        <dbReference type="ChEBI" id="CHEBI:29108"/>
    </ligand>
</feature>
<feature type="binding site" evidence="2">
    <location>
        <position position="198"/>
    </location>
    <ligand>
        <name>Ca(2+)</name>
        <dbReference type="ChEBI" id="CHEBI:29108"/>
    </ligand>
</feature>
<feature type="disulfide bond" evidence="3">
    <location>
        <begin position="115"/>
        <end position="195"/>
    </location>
</feature>
<feature type="disulfide bond" evidence="3">
    <location>
        <begin position="155"/>
        <end position="179"/>
    </location>
</feature>
<feature type="disulfide bond" evidence="3">
    <location>
        <begin position="157"/>
        <end position="162"/>
    </location>
</feature>
<evidence type="ECO:0000250" key="1">
    <source>
        <dbReference type="UniProtKB" id="P83512"/>
    </source>
</evidence>
<evidence type="ECO:0000250" key="2">
    <source>
        <dbReference type="UniProtKB" id="P85314"/>
    </source>
</evidence>
<evidence type="ECO:0000255" key="3">
    <source>
        <dbReference type="PROSITE-ProRule" id="PRU00276"/>
    </source>
</evidence>
<evidence type="ECO:0000269" key="4">
    <source ref="1"/>
</evidence>
<evidence type="ECO:0000303" key="5">
    <source ref="1"/>
</evidence>
<evidence type="ECO:0000305" key="6"/>
<evidence type="ECO:0000305" key="7">
    <source ref="1"/>
</evidence>
<protein>
    <recommendedName>
        <fullName evidence="5">Snake venom metalloproteinase rhomb-I</fullName>
    </recommendedName>
    <alternativeName>
        <fullName evidence="7">Hemorrhagic metalloproteinase rhomb-I</fullName>
    </alternativeName>
</protein>
<accession>C0HM67</accession>
<organism evidence="5">
    <name type="scientific">Lachesis muta rhombeata</name>
    <name type="common">Bushmaster</name>
    <dbReference type="NCBI Taxonomy" id="60219"/>
    <lineage>
        <taxon>Eukaryota</taxon>
        <taxon>Metazoa</taxon>
        <taxon>Chordata</taxon>
        <taxon>Craniata</taxon>
        <taxon>Vertebrata</taxon>
        <taxon>Euteleostomi</taxon>
        <taxon>Lepidosauria</taxon>
        <taxon>Squamata</taxon>
        <taxon>Bifurcata</taxon>
        <taxon>Unidentata</taxon>
        <taxon>Episquamata</taxon>
        <taxon>Toxicofera</taxon>
        <taxon>Serpentes</taxon>
        <taxon>Colubroidea</taxon>
        <taxon>Viperidae</taxon>
        <taxon>Crotalinae</taxon>
        <taxon>Lachesis</taxon>
    </lineage>
</organism>
<reference evidence="6" key="1">
    <citation type="submission" date="2022-12" db="UniProtKB">
        <title>Rhomb-I, a P-I metalloproteinase from Lachesis muta rhombeata venom degrades vessel ECM components and impairs platelet aggregation.</title>
        <authorList>
            <person name="Alvarenga V.G."/>
            <person name="Oliveira L.S."/>
            <person name="Santos G.O."/>
            <person name="Vivas-Ruiz D.E."/>
            <person name="Borges M.H."/>
            <person name="De Souza R.C.G."/>
            <person name="Serrano S.M.T."/>
            <person name="Moura-da-Silva A.M."/>
            <person name="Sanchez E.F."/>
        </authorList>
    </citation>
    <scope>PROTEIN SEQUENCE</scope>
    <scope>IDENTIFICATION BY MASS SPECTROMETRY</scope>
    <scope>FUNCTION</scope>
    <scope>SUBCELLULAR LOCATION</scope>
    <scope>TISSUE SPECIFICITY</scope>
    <source>
        <tissue evidence="5">Venom</tissue>
    </source>
</reference>
<dbReference type="SMR" id="C0HM67"/>
<dbReference type="GO" id="GO:0005576">
    <property type="term" value="C:extracellular region"/>
    <property type="evidence" value="ECO:0007669"/>
    <property type="project" value="UniProtKB-SubCell"/>
</dbReference>
<dbReference type="GO" id="GO:0005886">
    <property type="term" value="C:plasma membrane"/>
    <property type="evidence" value="ECO:0007669"/>
    <property type="project" value="TreeGrafter"/>
</dbReference>
<dbReference type="GO" id="GO:0046872">
    <property type="term" value="F:metal ion binding"/>
    <property type="evidence" value="ECO:0007669"/>
    <property type="project" value="UniProtKB-KW"/>
</dbReference>
<dbReference type="GO" id="GO:0004222">
    <property type="term" value="F:metalloendopeptidase activity"/>
    <property type="evidence" value="ECO:0007669"/>
    <property type="project" value="InterPro"/>
</dbReference>
<dbReference type="GO" id="GO:0090729">
    <property type="term" value="F:toxin activity"/>
    <property type="evidence" value="ECO:0007669"/>
    <property type="project" value="UniProtKB-KW"/>
</dbReference>
<dbReference type="GO" id="GO:0006508">
    <property type="term" value="P:proteolysis"/>
    <property type="evidence" value="ECO:0007669"/>
    <property type="project" value="UniProtKB-KW"/>
</dbReference>
<dbReference type="CDD" id="cd04269">
    <property type="entry name" value="ZnMc_adamalysin_II_like"/>
    <property type="match status" value="1"/>
</dbReference>
<dbReference type="FunFam" id="3.40.390.10:FF:000002">
    <property type="entry name" value="Disintegrin and metalloproteinase domain-containing protein 22"/>
    <property type="match status" value="1"/>
</dbReference>
<dbReference type="Gene3D" id="3.40.390.10">
    <property type="entry name" value="Collagenase (Catalytic Domain)"/>
    <property type="match status" value="1"/>
</dbReference>
<dbReference type="InterPro" id="IPR024079">
    <property type="entry name" value="MetalloPept_cat_dom_sf"/>
</dbReference>
<dbReference type="InterPro" id="IPR001590">
    <property type="entry name" value="Peptidase_M12B"/>
</dbReference>
<dbReference type="InterPro" id="IPR034027">
    <property type="entry name" value="Reprolysin_adamalysin"/>
</dbReference>
<dbReference type="PANTHER" id="PTHR11905">
    <property type="entry name" value="ADAM A DISINTEGRIN AND METALLOPROTEASE DOMAIN"/>
    <property type="match status" value="1"/>
</dbReference>
<dbReference type="PANTHER" id="PTHR11905:SF32">
    <property type="entry name" value="DISINTEGRIN AND METALLOPROTEINASE DOMAIN-CONTAINING PROTEIN 28"/>
    <property type="match status" value="1"/>
</dbReference>
<dbReference type="Pfam" id="PF01421">
    <property type="entry name" value="Reprolysin"/>
    <property type="match status" value="1"/>
</dbReference>
<dbReference type="SUPFAM" id="SSF55486">
    <property type="entry name" value="Metalloproteases ('zincins'), catalytic domain"/>
    <property type="match status" value="1"/>
</dbReference>
<dbReference type="PROSITE" id="PS50215">
    <property type="entry name" value="ADAM_MEPRO"/>
    <property type="match status" value="1"/>
</dbReference>
<dbReference type="PROSITE" id="PS00142">
    <property type="entry name" value="ZINC_PROTEASE"/>
    <property type="match status" value="1"/>
</dbReference>
<keyword id="KW-0106">Calcium</keyword>
<keyword id="KW-0903">Direct protein sequencing</keyword>
<keyword id="KW-1015">Disulfide bond</keyword>
<keyword id="KW-1200">Hemorrhagic toxin</keyword>
<keyword id="KW-1199">Hemostasis impairing toxin</keyword>
<keyword id="KW-0378">Hydrolase</keyword>
<keyword id="KW-0479">Metal-binding</keyword>
<keyword id="KW-0482">Metalloprotease</keyword>
<keyword id="KW-0645">Protease</keyword>
<keyword id="KW-0964">Secreted</keyword>
<keyword id="KW-0800">Toxin</keyword>
<keyword id="KW-0862">Zinc</keyword>
<proteinExistence type="evidence at protein level"/>
<comment type="function">
    <text evidence="4">Snake venom zinc metalloproteinase that induces hemorrhage.</text>
</comment>
<comment type="cofactor">
    <cofactor evidence="1">
        <name>Zn(2+)</name>
        <dbReference type="ChEBI" id="CHEBI:29105"/>
    </cofactor>
    <text evidence="1">Binds 1 zinc ion per subunit.</text>
</comment>
<comment type="subunit">
    <text evidence="1">Monomer.</text>
</comment>
<comment type="subcellular location">
    <subcellularLocation>
        <location evidence="4">Secreted</location>
    </subcellularLocation>
</comment>
<comment type="tissue specificity">
    <text evidence="7">Expressed by the venom gland.</text>
</comment>
<comment type="mass spectrometry" mass="22860.908" method="MALDI" evidence="4"/>
<comment type="similarity">
    <text evidence="6">Belongs to the venom metalloproteinase (M12B) family. P-I subfamily.</text>
</comment>
<sequence length="200" mass="22582">FSQKYIELVVVADHGMFTKYNGNLNTIRTRVHEIVNTLNGFYRSLNVRVSLTELEIWSNQDLINVQSAAADTLKTFGEWRERVLLNRISHDNAQLLTAIDLADNTIGIAYTGGMCYPKNSVGIVQDHSPKTLLIAVTMAHELGHNLGMKHDENHCHCSASFCIMPPSISEGPSYEFSDCSKDYYQMFLTKRKPQCILNKP</sequence>
<name>VM1RI_LACMR</name>